<keyword id="KW-0687">Ribonucleoprotein</keyword>
<keyword id="KW-0689">Ribosomal protein</keyword>
<keyword id="KW-0694">RNA-binding</keyword>
<keyword id="KW-0699">rRNA-binding</keyword>
<feature type="chain" id="PRO_0000260137" description="Small ribosomal subunit protein bS20">
    <location>
        <begin position="1"/>
        <end position="88"/>
    </location>
</feature>
<reference key="1">
    <citation type="submission" date="2006-03" db="EMBL/GenBank/DDBJ databases">
        <title>Complete sequence of Rhodopseudomonas palustris BisB18.</title>
        <authorList>
            <consortium name="US DOE Joint Genome Institute"/>
            <person name="Copeland A."/>
            <person name="Lucas S."/>
            <person name="Lapidus A."/>
            <person name="Barry K."/>
            <person name="Detter J.C."/>
            <person name="Glavina del Rio T."/>
            <person name="Hammon N."/>
            <person name="Israni S."/>
            <person name="Dalin E."/>
            <person name="Tice H."/>
            <person name="Pitluck S."/>
            <person name="Chain P."/>
            <person name="Malfatti S."/>
            <person name="Shin M."/>
            <person name="Vergez L."/>
            <person name="Schmutz J."/>
            <person name="Larimer F."/>
            <person name="Land M."/>
            <person name="Hauser L."/>
            <person name="Pelletier D.A."/>
            <person name="Kyrpides N."/>
            <person name="Anderson I."/>
            <person name="Oda Y."/>
            <person name="Harwood C.S."/>
            <person name="Richardson P."/>
        </authorList>
    </citation>
    <scope>NUCLEOTIDE SEQUENCE [LARGE SCALE GENOMIC DNA]</scope>
    <source>
        <strain>BisB18</strain>
    </source>
</reference>
<evidence type="ECO:0000255" key="1">
    <source>
        <dbReference type="HAMAP-Rule" id="MF_00500"/>
    </source>
</evidence>
<evidence type="ECO:0000305" key="2"/>
<comment type="function">
    <text evidence="1">Binds directly to 16S ribosomal RNA.</text>
</comment>
<comment type="similarity">
    <text evidence="1">Belongs to the bacterial ribosomal protein bS20 family.</text>
</comment>
<name>RS20_RHOPB</name>
<proteinExistence type="inferred from homology"/>
<sequence>MANTTSAKKATRKIARRTIVNKSRRTQMRGAVRIVEEAIASGDRDAALKAMIRAEPELMQAAQRNIVHKNTASRKVSRLSHQIAKLAK</sequence>
<dbReference type="EMBL" id="CP000301">
    <property type="protein sequence ID" value="ABD90465.1"/>
    <property type="molecule type" value="Genomic_DNA"/>
</dbReference>
<dbReference type="SMR" id="Q20WM1"/>
<dbReference type="STRING" id="316056.RPC_4943"/>
<dbReference type="KEGG" id="rpc:RPC_4943"/>
<dbReference type="eggNOG" id="COG0268">
    <property type="taxonomic scope" value="Bacteria"/>
</dbReference>
<dbReference type="HOGENOM" id="CLU_160655_3_0_5"/>
<dbReference type="OrthoDB" id="9807974at2"/>
<dbReference type="GO" id="GO:0005829">
    <property type="term" value="C:cytosol"/>
    <property type="evidence" value="ECO:0007669"/>
    <property type="project" value="TreeGrafter"/>
</dbReference>
<dbReference type="GO" id="GO:0015935">
    <property type="term" value="C:small ribosomal subunit"/>
    <property type="evidence" value="ECO:0007669"/>
    <property type="project" value="TreeGrafter"/>
</dbReference>
<dbReference type="GO" id="GO:0070181">
    <property type="term" value="F:small ribosomal subunit rRNA binding"/>
    <property type="evidence" value="ECO:0007669"/>
    <property type="project" value="TreeGrafter"/>
</dbReference>
<dbReference type="GO" id="GO:0003735">
    <property type="term" value="F:structural constituent of ribosome"/>
    <property type="evidence" value="ECO:0007669"/>
    <property type="project" value="InterPro"/>
</dbReference>
<dbReference type="GO" id="GO:0006412">
    <property type="term" value="P:translation"/>
    <property type="evidence" value="ECO:0007669"/>
    <property type="project" value="UniProtKB-UniRule"/>
</dbReference>
<dbReference type="Gene3D" id="1.20.58.110">
    <property type="entry name" value="Ribosomal protein S20"/>
    <property type="match status" value="1"/>
</dbReference>
<dbReference type="HAMAP" id="MF_00500">
    <property type="entry name" value="Ribosomal_bS20"/>
    <property type="match status" value="1"/>
</dbReference>
<dbReference type="InterPro" id="IPR002583">
    <property type="entry name" value="Ribosomal_bS20"/>
</dbReference>
<dbReference type="InterPro" id="IPR036510">
    <property type="entry name" value="Ribosomal_bS20_sf"/>
</dbReference>
<dbReference type="NCBIfam" id="TIGR00029">
    <property type="entry name" value="S20"/>
    <property type="match status" value="1"/>
</dbReference>
<dbReference type="PANTHER" id="PTHR33398">
    <property type="entry name" value="30S RIBOSOMAL PROTEIN S20"/>
    <property type="match status" value="1"/>
</dbReference>
<dbReference type="PANTHER" id="PTHR33398:SF1">
    <property type="entry name" value="SMALL RIBOSOMAL SUBUNIT PROTEIN BS20C"/>
    <property type="match status" value="1"/>
</dbReference>
<dbReference type="Pfam" id="PF01649">
    <property type="entry name" value="Ribosomal_S20p"/>
    <property type="match status" value="1"/>
</dbReference>
<dbReference type="SUPFAM" id="SSF46992">
    <property type="entry name" value="Ribosomal protein S20"/>
    <property type="match status" value="1"/>
</dbReference>
<accession>Q20WM1</accession>
<gene>
    <name evidence="1" type="primary">rpsT</name>
    <name type="ordered locus">RPC_4943</name>
</gene>
<protein>
    <recommendedName>
        <fullName evidence="1">Small ribosomal subunit protein bS20</fullName>
    </recommendedName>
    <alternativeName>
        <fullName evidence="2">30S ribosomal protein S20</fullName>
    </alternativeName>
</protein>
<organism>
    <name type="scientific">Rhodopseudomonas palustris (strain BisB18)</name>
    <dbReference type="NCBI Taxonomy" id="316056"/>
    <lineage>
        <taxon>Bacteria</taxon>
        <taxon>Pseudomonadati</taxon>
        <taxon>Pseudomonadota</taxon>
        <taxon>Alphaproteobacteria</taxon>
        <taxon>Hyphomicrobiales</taxon>
        <taxon>Nitrobacteraceae</taxon>
        <taxon>Rhodopseudomonas</taxon>
    </lineage>
</organism>